<comment type="function">
    <text evidence="1">Allows the formation of correctly charged Gln-tRNA(Gln) through the transamidation of misacylated Glu-tRNA(Gln) in organisms which lack glutaminyl-tRNA synthetase. The reaction takes place in the presence of glutamine and ATP through an activated gamma-phospho-Glu-tRNA(Gln).</text>
</comment>
<comment type="catalytic activity">
    <reaction evidence="1">
        <text>L-glutamyl-tRNA(Gln) + L-glutamine + ATP + H2O = L-glutaminyl-tRNA(Gln) + L-glutamate + ADP + phosphate + H(+)</text>
        <dbReference type="Rhea" id="RHEA:17521"/>
        <dbReference type="Rhea" id="RHEA-COMP:9681"/>
        <dbReference type="Rhea" id="RHEA-COMP:9684"/>
        <dbReference type="ChEBI" id="CHEBI:15377"/>
        <dbReference type="ChEBI" id="CHEBI:15378"/>
        <dbReference type="ChEBI" id="CHEBI:29985"/>
        <dbReference type="ChEBI" id="CHEBI:30616"/>
        <dbReference type="ChEBI" id="CHEBI:43474"/>
        <dbReference type="ChEBI" id="CHEBI:58359"/>
        <dbReference type="ChEBI" id="CHEBI:78520"/>
        <dbReference type="ChEBI" id="CHEBI:78521"/>
        <dbReference type="ChEBI" id="CHEBI:456216"/>
        <dbReference type="EC" id="6.3.5.7"/>
    </reaction>
</comment>
<comment type="subunit">
    <text evidence="1">Heterotrimer of A, B and C subunits.</text>
</comment>
<comment type="similarity">
    <text evidence="1">Belongs to the amidase family. GatA subfamily.</text>
</comment>
<gene>
    <name evidence="1" type="primary">gatA</name>
    <name type="ordered locus">Dred_2341</name>
</gene>
<evidence type="ECO:0000255" key="1">
    <source>
        <dbReference type="HAMAP-Rule" id="MF_00120"/>
    </source>
</evidence>
<sequence length="485" mass="53137">MDLFQLTAHQLHQLLTKKEISALDITEAVYNRIEQVEDKVKSYLTLTREQAEIKARQVDQKIAAGESIGPLAGIPIAIKDNMCTQGIRTTCASKILYNFVPPYSATSVEKVYTADMVMVGKTNMDEFAMGSSTENSGFHLTHNPWDLDRVPGGSSGGSAAAVAAGEAIISLGSDTGGSIRQPAALCGVVGMKPTYGSVSRYGLVAYASSLDQIGPFTRDVTDMAHVLNVICGHDPMDSTSANLKQTDYTQFLTNDIKGMKIGVPREYMADGIDPQVREKIKAAIQKLTELGAHVEETSMPHTDYAMPAYYLIATAEASSNLARYDGVRYGLRVEEARDLVDMFMRSRSQGFGDEVKRRIMLGTYSLSAGYYDAYYLKALKVRTLIKQDFDRAFEKYDALLSPTSPTTAFKIGEMVNDPIQMYLQDVCTIPVNLAGIPAISLPCGLANNLPVGLQLMGKAFDEGTLLRIAYTLEQNTEYTRLRPEI</sequence>
<keyword id="KW-0067">ATP-binding</keyword>
<keyword id="KW-0436">Ligase</keyword>
<keyword id="KW-0547">Nucleotide-binding</keyword>
<keyword id="KW-0648">Protein biosynthesis</keyword>
<keyword id="KW-1185">Reference proteome</keyword>
<proteinExistence type="inferred from homology"/>
<protein>
    <recommendedName>
        <fullName evidence="1">Glutamyl-tRNA(Gln) amidotransferase subunit A</fullName>
        <shortName evidence="1">Glu-ADT subunit A</shortName>
        <ecNumber evidence="1">6.3.5.7</ecNumber>
    </recommendedName>
</protein>
<dbReference type="EC" id="6.3.5.7" evidence="1"/>
<dbReference type="EMBL" id="CP000612">
    <property type="protein sequence ID" value="ABO50851.1"/>
    <property type="molecule type" value="Genomic_DNA"/>
</dbReference>
<dbReference type="RefSeq" id="WP_011878649.1">
    <property type="nucleotide sequence ID" value="NC_009253.1"/>
</dbReference>
<dbReference type="SMR" id="A4J6Z8"/>
<dbReference type="STRING" id="349161.Dred_2341"/>
<dbReference type="KEGG" id="drm:Dred_2341"/>
<dbReference type="eggNOG" id="COG0154">
    <property type="taxonomic scope" value="Bacteria"/>
</dbReference>
<dbReference type="HOGENOM" id="CLU_009600_0_3_9"/>
<dbReference type="OrthoDB" id="9811471at2"/>
<dbReference type="Proteomes" id="UP000001556">
    <property type="component" value="Chromosome"/>
</dbReference>
<dbReference type="GO" id="GO:0030956">
    <property type="term" value="C:glutamyl-tRNA(Gln) amidotransferase complex"/>
    <property type="evidence" value="ECO:0007669"/>
    <property type="project" value="InterPro"/>
</dbReference>
<dbReference type="GO" id="GO:0005524">
    <property type="term" value="F:ATP binding"/>
    <property type="evidence" value="ECO:0007669"/>
    <property type="project" value="UniProtKB-KW"/>
</dbReference>
<dbReference type="GO" id="GO:0050567">
    <property type="term" value="F:glutaminyl-tRNA synthase (glutamine-hydrolyzing) activity"/>
    <property type="evidence" value="ECO:0007669"/>
    <property type="project" value="UniProtKB-UniRule"/>
</dbReference>
<dbReference type="GO" id="GO:0006412">
    <property type="term" value="P:translation"/>
    <property type="evidence" value="ECO:0007669"/>
    <property type="project" value="UniProtKB-UniRule"/>
</dbReference>
<dbReference type="Gene3D" id="3.90.1300.10">
    <property type="entry name" value="Amidase signature (AS) domain"/>
    <property type="match status" value="1"/>
</dbReference>
<dbReference type="HAMAP" id="MF_00120">
    <property type="entry name" value="GatA"/>
    <property type="match status" value="1"/>
</dbReference>
<dbReference type="InterPro" id="IPR000120">
    <property type="entry name" value="Amidase"/>
</dbReference>
<dbReference type="InterPro" id="IPR020556">
    <property type="entry name" value="Amidase_CS"/>
</dbReference>
<dbReference type="InterPro" id="IPR023631">
    <property type="entry name" value="Amidase_dom"/>
</dbReference>
<dbReference type="InterPro" id="IPR036928">
    <property type="entry name" value="AS_sf"/>
</dbReference>
<dbReference type="InterPro" id="IPR004412">
    <property type="entry name" value="GatA"/>
</dbReference>
<dbReference type="NCBIfam" id="TIGR00132">
    <property type="entry name" value="gatA"/>
    <property type="match status" value="1"/>
</dbReference>
<dbReference type="PANTHER" id="PTHR11895:SF151">
    <property type="entry name" value="GLUTAMYL-TRNA(GLN) AMIDOTRANSFERASE SUBUNIT A"/>
    <property type="match status" value="1"/>
</dbReference>
<dbReference type="PANTHER" id="PTHR11895">
    <property type="entry name" value="TRANSAMIDASE"/>
    <property type="match status" value="1"/>
</dbReference>
<dbReference type="Pfam" id="PF01425">
    <property type="entry name" value="Amidase"/>
    <property type="match status" value="1"/>
</dbReference>
<dbReference type="SUPFAM" id="SSF75304">
    <property type="entry name" value="Amidase signature (AS) enzymes"/>
    <property type="match status" value="1"/>
</dbReference>
<dbReference type="PROSITE" id="PS00571">
    <property type="entry name" value="AMIDASES"/>
    <property type="match status" value="1"/>
</dbReference>
<name>GATA_DESRM</name>
<organism>
    <name type="scientific">Desulforamulus reducens (strain ATCC BAA-1160 / DSM 100696 / MI-1)</name>
    <name type="common">Desulfotomaculum reducens</name>
    <dbReference type="NCBI Taxonomy" id="349161"/>
    <lineage>
        <taxon>Bacteria</taxon>
        <taxon>Bacillati</taxon>
        <taxon>Bacillota</taxon>
        <taxon>Clostridia</taxon>
        <taxon>Eubacteriales</taxon>
        <taxon>Peptococcaceae</taxon>
        <taxon>Desulforamulus</taxon>
    </lineage>
</organism>
<accession>A4J6Z8</accession>
<feature type="chain" id="PRO_1000071367" description="Glutamyl-tRNA(Gln) amidotransferase subunit A">
    <location>
        <begin position="1"/>
        <end position="485"/>
    </location>
</feature>
<feature type="active site" description="Charge relay system" evidence="1">
    <location>
        <position position="79"/>
    </location>
</feature>
<feature type="active site" description="Charge relay system" evidence="1">
    <location>
        <position position="154"/>
    </location>
</feature>
<feature type="active site" description="Acyl-ester intermediate" evidence="1">
    <location>
        <position position="178"/>
    </location>
</feature>
<reference key="1">
    <citation type="submission" date="2007-03" db="EMBL/GenBank/DDBJ databases">
        <title>Complete sequence of Desulfotomaculum reducens MI-1.</title>
        <authorList>
            <consortium name="US DOE Joint Genome Institute"/>
            <person name="Copeland A."/>
            <person name="Lucas S."/>
            <person name="Lapidus A."/>
            <person name="Barry K."/>
            <person name="Detter J.C."/>
            <person name="Glavina del Rio T."/>
            <person name="Hammon N."/>
            <person name="Israni S."/>
            <person name="Dalin E."/>
            <person name="Tice H."/>
            <person name="Pitluck S."/>
            <person name="Sims D."/>
            <person name="Brettin T."/>
            <person name="Bruce D."/>
            <person name="Han C."/>
            <person name="Tapia R."/>
            <person name="Schmutz J."/>
            <person name="Larimer F."/>
            <person name="Land M."/>
            <person name="Hauser L."/>
            <person name="Kyrpides N."/>
            <person name="Kim E."/>
            <person name="Tebo B.M."/>
            <person name="Richardson P."/>
        </authorList>
    </citation>
    <scope>NUCLEOTIDE SEQUENCE [LARGE SCALE GENOMIC DNA]</scope>
    <source>
        <strain>ATCC BAA-1160 / DSM 100696 / MI-1</strain>
    </source>
</reference>